<reference key="1">
    <citation type="journal article" date="2001" name="Nature">
        <title>Complete genome sequence of Salmonella enterica serovar Typhimurium LT2.</title>
        <authorList>
            <person name="McClelland M."/>
            <person name="Sanderson K.E."/>
            <person name="Spieth J."/>
            <person name="Clifton S.W."/>
            <person name="Latreille P."/>
            <person name="Courtney L."/>
            <person name="Porwollik S."/>
            <person name="Ali J."/>
            <person name="Dante M."/>
            <person name="Du F."/>
            <person name="Hou S."/>
            <person name="Layman D."/>
            <person name="Leonard S."/>
            <person name="Nguyen C."/>
            <person name="Scott K."/>
            <person name="Holmes A."/>
            <person name="Grewal N."/>
            <person name="Mulvaney E."/>
            <person name="Ryan E."/>
            <person name="Sun H."/>
            <person name="Florea L."/>
            <person name="Miller W."/>
            <person name="Stoneking T."/>
            <person name="Nhan M."/>
            <person name="Waterston R."/>
            <person name="Wilson R.K."/>
        </authorList>
    </citation>
    <scope>NUCLEOTIDE SEQUENCE [LARGE SCALE GENOMIC DNA]</scope>
    <source>
        <strain>LT2 / SGSC1412 / ATCC 700720</strain>
    </source>
</reference>
<reference key="2">
    <citation type="journal article" date="2001" name="J. Biol. Chem.">
        <title>An in vitro reducing system for the enzymic conversion of cobalamin to adenosylcobalamin.</title>
        <authorList>
            <person name="Fonseca M.V."/>
            <person name="Escalante-Semerena J.C."/>
        </authorList>
    </citation>
    <scope>FUNCTION AS A COBALT REDUCTASE</scope>
</reference>
<feature type="initiator methionine" description="Removed" evidence="1">
    <location>
        <position position="1"/>
    </location>
</feature>
<feature type="chain" id="PRO_0000171625" description="Flavodoxin 1">
    <location>
        <begin position="2"/>
        <end position="176"/>
    </location>
</feature>
<feature type="domain" description="Flavodoxin-like" evidence="2">
    <location>
        <begin position="4"/>
        <end position="165"/>
    </location>
</feature>
<name>FLAV_SALTY</name>
<proteinExistence type="evidence at protein level"/>
<accession>Q8ZQX1</accession>
<protein>
    <recommendedName>
        <fullName>Flavodoxin 1</fullName>
    </recommendedName>
</protein>
<sequence length="176" mass="19637">MAITGIFFGSDTGNTENIAKMIQKQLGKDVADVHDIAKSSKEDLEGYDILLLGIPTWYYGEAQCDWDDFFPTLEEIDFNGKLVALFGCGDQEDYAEYFCDALGTIRDIIEPRGATIVGHWPTAGYHFEASKGLADDDHFVGLAIDEDRQPELTAERVEKWVKQVSAELHLDDILNA</sequence>
<organism>
    <name type="scientific">Salmonella typhimurium (strain LT2 / SGSC1412 / ATCC 700720)</name>
    <dbReference type="NCBI Taxonomy" id="99287"/>
    <lineage>
        <taxon>Bacteria</taxon>
        <taxon>Pseudomonadati</taxon>
        <taxon>Pseudomonadota</taxon>
        <taxon>Gammaproteobacteria</taxon>
        <taxon>Enterobacterales</taxon>
        <taxon>Enterobacteriaceae</taxon>
        <taxon>Salmonella</taxon>
    </lineage>
</organism>
<evidence type="ECO:0000250" key="1"/>
<evidence type="ECO:0000255" key="2">
    <source>
        <dbReference type="PROSITE-ProRule" id="PRU00088"/>
    </source>
</evidence>
<evidence type="ECO:0000269" key="3">
    <source>
    </source>
</evidence>
<evidence type="ECO:0000305" key="4"/>
<comment type="function">
    <text evidence="3 4">Low-potential electron donor to a number of redox enzymes (Potential). Involved in the reactivation of inactive cob(II)alamin in methionine synthase.</text>
</comment>
<comment type="cofactor">
    <cofactor evidence="1">
        <name>FMN</name>
        <dbReference type="ChEBI" id="CHEBI:58210"/>
    </cofactor>
</comment>
<comment type="similarity">
    <text evidence="4">Belongs to the flavodoxin family.</text>
</comment>
<keyword id="KW-0249">Electron transport</keyword>
<keyword id="KW-0285">Flavoprotein</keyword>
<keyword id="KW-0288">FMN</keyword>
<keyword id="KW-1185">Reference proteome</keyword>
<keyword id="KW-0813">Transport</keyword>
<gene>
    <name type="primary">fldA</name>
    <name type="ordered locus">STM0694</name>
</gene>
<dbReference type="EMBL" id="AE006468">
    <property type="protein sequence ID" value="AAL19638.1"/>
    <property type="molecule type" value="Genomic_DNA"/>
</dbReference>
<dbReference type="RefSeq" id="NP_459679.1">
    <property type="nucleotide sequence ID" value="NC_003197.2"/>
</dbReference>
<dbReference type="RefSeq" id="WP_001018621.1">
    <property type="nucleotide sequence ID" value="NC_003197.2"/>
</dbReference>
<dbReference type="BMRB" id="Q8ZQX1"/>
<dbReference type="SMR" id="Q8ZQX1"/>
<dbReference type="STRING" id="99287.STM0694"/>
<dbReference type="PaxDb" id="99287-STM0694"/>
<dbReference type="GeneID" id="1252214"/>
<dbReference type="GeneID" id="66755149"/>
<dbReference type="KEGG" id="stm:STM0694"/>
<dbReference type="PATRIC" id="fig|99287.12.peg.725"/>
<dbReference type="HOGENOM" id="CLU_051402_1_1_6"/>
<dbReference type="PhylomeDB" id="Q8ZQX1"/>
<dbReference type="BioCyc" id="MetaCyc:MONOMER-13232"/>
<dbReference type="BioCyc" id="SENT99287:STM0694-MONOMER"/>
<dbReference type="Proteomes" id="UP000001014">
    <property type="component" value="Chromosome"/>
</dbReference>
<dbReference type="GO" id="GO:0009055">
    <property type="term" value="F:electron transfer activity"/>
    <property type="evidence" value="ECO:0007669"/>
    <property type="project" value="InterPro"/>
</dbReference>
<dbReference type="GO" id="GO:0010181">
    <property type="term" value="F:FMN binding"/>
    <property type="evidence" value="ECO:0007669"/>
    <property type="project" value="InterPro"/>
</dbReference>
<dbReference type="FunFam" id="3.40.50.360:FF:000002">
    <property type="entry name" value="Flavodoxin"/>
    <property type="match status" value="1"/>
</dbReference>
<dbReference type="Gene3D" id="3.40.50.360">
    <property type="match status" value="1"/>
</dbReference>
<dbReference type="InterPro" id="IPR050619">
    <property type="entry name" value="Flavodoxin"/>
</dbReference>
<dbReference type="InterPro" id="IPR008254">
    <property type="entry name" value="Flavodoxin/NO_synth"/>
</dbReference>
<dbReference type="InterPro" id="IPR001226">
    <property type="entry name" value="Flavodoxin_CS"/>
</dbReference>
<dbReference type="InterPro" id="IPR010086">
    <property type="entry name" value="Flavodoxin_lc"/>
</dbReference>
<dbReference type="InterPro" id="IPR029039">
    <property type="entry name" value="Flavoprotein-like_sf"/>
</dbReference>
<dbReference type="NCBIfam" id="TIGR01752">
    <property type="entry name" value="flav_long"/>
    <property type="match status" value="1"/>
</dbReference>
<dbReference type="NCBIfam" id="NF006735">
    <property type="entry name" value="PRK09267.1-1"/>
    <property type="match status" value="1"/>
</dbReference>
<dbReference type="NCBIfam" id="NF006736">
    <property type="entry name" value="PRK09267.1-2"/>
    <property type="match status" value="1"/>
</dbReference>
<dbReference type="NCBIfam" id="NF006737">
    <property type="entry name" value="PRK09267.1-3"/>
    <property type="match status" value="1"/>
</dbReference>
<dbReference type="NCBIfam" id="NF006739">
    <property type="entry name" value="PRK09267.1-5"/>
    <property type="match status" value="1"/>
</dbReference>
<dbReference type="PANTHER" id="PTHR42809:SF1">
    <property type="entry name" value="FLAVODOXIN 1"/>
    <property type="match status" value="1"/>
</dbReference>
<dbReference type="PANTHER" id="PTHR42809">
    <property type="entry name" value="FLAVODOXIN 2"/>
    <property type="match status" value="1"/>
</dbReference>
<dbReference type="Pfam" id="PF00258">
    <property type="entry name" value="Flavodoxin_1"/>
    <property type="match status" value="1"/>
</dbReference>
<dbReference type="PIRSF" id="PIRSF038996">
    <property type="entry name" value="FldA"/>
    <property type="match status" value="1"/>
</dbReference>
<dbReference type="SUPFAM" id="SSF52218">
    <property type="entry name" value="Flavoproteins"/>
    <property type="match status" value="1"/>
</dbReference>
<dbReference type="PROSITE" id="PS00201">
    <property type="entry name" value="FLAVODOXIN"/>
    <property type="match status" value="1"/>
</dbReference>
<dbReference type="PROSITE" id="PS50902">
    <property type="entry name" value="FLAVODOXIN_LIKE"/>
    <property type="match status" value="1"/>
</dbReference>